<accession>Q2YIH9</accession>
<feature type="chain" id="PRO_1000016317" description="Histidine--tRNA ligase">
    <location>
        <begin position="1"/>
        <end position="502"/>
    </location>
</feature>
<proteinExistence type="inferred from homology"/>
<comment type="catalytic activity">
    <reaction evidence="1">
        <text>tRNA(His) + L-histidine + ATP = L-histidyl-tRNA(His) + AMP + diphosphate + H(+)</text>
        <dbReference type="Rhea" id="RHEA:17313"/>
        <dbReference type="Rhea" id="RHEA-COMP:9665"/>
        <dbReference type="Rhea" id="RHEA-COMP:9689"/>
        <dbReference type="ChEBI" id="CHEBI:15378"/>
        <dbReference type="ChEBI" id="CHEBI:30616"/>
        <dbReference type="ChEBI" id="CHEBI:33019"/>
        <dbReference type="ChEBI" id="CHEBI:57595"/>
        <dbReference type="ChEBI" id="CHEBI:78442"/>
        <dbReference type="ChEBI" id="CHEBI:78527"/>
        <dbReference type="ChEBI" id="CHEBI:456215"/>
        <dbReference type="EC" id="6.1.1.21"/>
    </reaction>
</comment>
<comment type="subunit">
    <text evidence="1">Homodimer.</text>
</comment>
<comment type="subcellular location">
    <subcellularLocation>
        <location evidence="1">Cytoplasm</location>
    </subcellularLocation>
</comment>
<comment type="similarity">
    <text evidence="1">Belongs to the class-II aminoacyl-tRNA synthetase family.</text>
</comment>
<organism>
    <name type="scientific">Brucella abortus (strain 2308)</name>
    <dbReference type="NCBI Taxonomy" id="359391"/>
    <lineage>
        <taxon>Bacteria</taxon>
        <taxon>Pseudomonadati</taxon>
        <taxon>Pseudomonadota</taxon>
        <taxon>Alphaproteobacteria</taxon>
        <taxon>Hyphomicrobiales</taxon>
        <taxon>Brucellaceae</taxon>
        <taxon>Brucella/Ochrobactrum group</taxon>
        <taxon>Brucella</taxon>
    </lineage>
</organism>
<gene>
    <name evidence="1" type="primary">hisS</name>
    <name type="ordered locus">BAB2_0181</name>
</gene>
<name>SYH_BRUA2</name>
<keyword id="KW-0030">Aminoacyl-tRNA synthetase</keyword>
<keyword id="KW-0067">ATP-binding</keyword>
<keyword id="KW-0963">Cytoplasm</keyword>
<keyword id="KW-0436">Ligase</keyword>
<keyword id="KW-0547">Nucleotide-binding</keyword>
<keyword id="KW-0648">Protein biosynthesis</keyword>
<keyword id="KW-1185">Reference proteome</keyword>
<dbReference type="EC" id="6.1.1.21" evidence="1"/>
<dbReference type="EMBL" id="AM040265">
    <property type="protein sequence ID" value="CAJ12347.1"/>
    <property type="molecule type" value="Genomic_DNA"/>
</dbReference>
<dbReference type="RefSeq" id="WP_002968826.1">
    <property type="nucleotide sequence ID" value="NZ_KN046823.1"/>
</dbReference>
<dbReference type="SMR" id="Q2YIH9"/>
<dbReference type="STRING" id="359391.BAB2_0181"/>
<dbReference type="GeneID" id="93015856"/>
<dbReference type="KEGG" id="bmf:BAB2_0181"/>
<dbReference type="PATRIC" id="fig|359391.11.peg.2131"/>
<dbReference type="HOGENOM" id="CLU_025113_3_2_5"/>
<dbReference type="PhylomeDB" id="Q2YIH9"/>
<dbReference type="Proteomes" id="UP000002719">
    <property type="component" value="Chromosome II"/>
</dbReference>
<dbReference type="GO" id="GO:0005737">
    <property type="term" value="C:cytoplasm"/>
    <property type="evidence" value="ECO:0007669"/>
    <property type="project" value="UniProtKB-SubCell"/>
</dbReference>
<dbReference type="GO" id="GO:0005524">
    <property type="term" value="F:ATP binding"/>
    <property type="evidence" value="ECO:0007669"/>
    <property type="project" value="UniProtKB-UniRule"/>
</dbReference>
<dbReference type="GO" id="GO:0004821">
    <property type="term" value="F:histidine-tRNA ligase activity"/>
    <property type="evidence" value="ECO:0007669"/>
    <property type="project" value="UniProtKB-UniRule"/>
</dbReference>
<dbReference type="GO" id="GO:0006427">
    <property type="term" value="P:histidyl-tRNA aminoacylation"/>
    <property type="evidence" value="ECO:0007669"/>
    <property type="project" value="UniProtKB-UniRule"/>
</dbReference>
<dbReference type="CDD" id="cd00773">
    <property type="entry name" value="HisRS-like_core"/>
    <property type="match status" value="1"/>
</dbReference>
<dbReference type="CDD" id="cd00859">
    <property type="entry name" value="HisRS_anticodon"/>
    <property type="match status" value="1"/>
</dbReference>
<dbReference type="Gene3D" id="3.40.50.800">
    <property type="entry name" value="Anticodon-binding domain"/>
    <property type="match status" value="1"/>
</dbReference>
<dbReference type="Gene3D" id="3.30.930.10">
    <property type="entry name" value="Bira Bifunctional Protein, Domain 2"/>
    <property type="match status" value="1"/>
</dbReference>
<dbReference type="HAMAP" id="MF_00127">
    <property type="entry name" value="His_tRNA_synth"/>
    <property type="match status" value="1"/>
</dbReference>
<dbReference type="InterPro" id="IPR006195">
    <property type="entry name" value="aa-tRNA-synth_II"/>
</dbReference>
<dbReference type="InterPro" id="IPR045864">
    <property type="entry name" value="aa-tRNA-synth_II/BPL/LPL"/>
</dbReference>
<dbReference type="InterPro" id="IPR004154">
    <property type="entry name" value="Anticodon-bd"/>
</dbReference>
<dbReference type="InterPro" id="IPR036621">
    <property type="entry name" value="Anticodon-bd_dom_sf"/>
</dbReference>
<dbReference type="InterPro" id="IPR015807">
    <property type="entry name" value="His-tRNA-ligase"/>
</dbReference>
<dbReference type="InterPro" id="IPR041715">
    <property type="entry name" value="HisRS-like_core"/>
</dbReference>
<dbReference type="InterPro" id="IPR004516">
    <property type="entry name" value="HisRS/HisZ"/>
</dbReference>
<dbReference type="InterPro" id="IPR033656">
    <property type="entry name" value="HisRS_anticodon"/>
</dbReference>
<dbReference type="NCBIfam" id="TIGR00442">
    <property type="entry name" value="hisS"/>
    <property type="match status" value="1"/>
</dbReference>
<dbReference type="PANTHER" id="PTHR11476:SF7">
    <property type="entry name" value="HISTIDINE--TRNA LIGASE"/>
    <property type="match status" value="1"/>
</dbReference>
<dbReference type="PANTHER" id="PTHR11476">
    <property type="entry name" value="HISTIDYL-TRNA SYNTHETASE"/>
    <property type="match status" value="1"/>
</dbReference>
<dbReference type="Pfam" id="PF03129">
    <property type="entry name" value="HGTP_anticodon"/>
    <property type="match status" value="1"/>
</dbReference>
<dbReference type="Pfam" id="PF13393">
    <property type="entry name" value="tRNA-synt_His"/>
    <property type="match status" value="1"/>
</dbReference>
<dbReference type="PIRSF" id="PIRSF001549">
    <property type="entry name" value="His-tRNA_synth"/>
    <property type="match status" value="1"/>
</dbReference>
<dbReference type="SUPFAM" id="SSF52954">
    <property type="entry name" value="Class II aaRS ABD-related"/>
    <property type="match status" value="1"/>
</dbReference>
<dbReference type="SUPFAM" id="SSF55681">
    <property type="entry name" value="Class II aaRS and biotin synthetases"/>
    <property type="match status" value="1"/>
</dbReference>
<dbReference type="PROSITE" id="PS50862">
    <property type="entry name" value="AA_TRNA_LIGASE_II"/>
    <property type="match status" value="1"/>
</dbReference>
<sequence length="502" mass="55136">MADKADKMKARLPRGFVDRVPDDLRAAEKMMATIREVYDLYGFEPVETPLVEYTDALGKFLPDQDRPNEGVFSFQDDDEQWLSLRYDLTAPLARYVAENFETLPKPYRSYRNGWVFRNEKPGPGRFRQFMQFDADTVGAPNVSADAEMCMMMADTLERLGIQRGDYAIRVNNRKVLDGVLDAIGLEGEGNAAKRLNVLRAIDKLDKFGPEGVRLLLGKGRLDESGDFTKGAQLPEAAIEKVLAFTAAGGADGAQTIANLQAVVAGNAKGEEGVQELADMQALFFAGGYEGRVKIDPSVVRGLEYYTGPVFEAELLFDVTNEDGQKVVFGSVGGGGRYDGLVSRFRGEPVPATGFSIGVSRLMTALKNLGKLDVSDTVGPVVVLVMDKDTQNLGRYQKMVSDLRKAGIRAEMYVGGSGMKAQMKYADRRAAPCVVIQGSQEREAGEVQIKDLVEGKRLSAEIEDNVTWLESRPAQITVREDGLVDAVREILDAQARDRAEQSK</sequence>
<protein>
    <recommendedName>
        <fullName evidence="1">Histidine--tRNA ligase</fullName>
        <ecNumber evidence="1">6.1.1.21</ecNumber>
    </recommendedName>
    <alternativeName>
        <fullName evidence="1">Histidyl-tRNA synthetase</fullName>
        <shortName evidence="1">HisRS</shortName>
    </alternativeName>
</protein>
<evidence type="ECO:0000255" key="1">
    <source>
        <dbReference type="HAMAP-Rule" id="MF_00127"/>
    </source>
</evidence>
<reference key="1">
    <citation type="journal article" date="2005" name="Infect. Immun.">
        <title>Whole-genome analyses of speciation events in pathogenic Brucellae.</title>
        <authorList>
            <person name="Chain P.S."/>
            <person name="Comerci D.J."/>
            <person name="Tolmasky M.E."/>
            <person name="Larimer F.W."/>
            <person name="Malfatti S.A."/>
            <person name="Vergez L.M."/>
            <person name="Aguero F."/>
            <person name="Land M.L."/>
            <person name="Ugalde R.A."/>
            <person name="Garcia E."/>
        </authorList>
    </citation>
    <scope>NUCLEOTIDE SEQUENCE [LARGE SCALE GENOMIC DNA]</scope>
    <source>
        <strain>2308</strain>
    </source>
</reference>